<geneLocation type="chloroplast"/>
<accession>P51372</accession>
<comment type="subcellular location">
    <subcellularLocation>
        <location>Plastid</location>
        <location>Chloroplast</location>
    </subcellularLocation>
</comment>
<sequence length="209" mass="23736">MKRQYKNTKKEFLGACFLGIVALFSLTIWHVINRTSKNKSYKVFVEFDSAYGIQEGTSVRLRGLPIGKVVGISQSSHSILTRIEIQSCNTIIPKTSLIETNQTGLLNDTIIDIVPFTTLNQEYHSLKEGPLSKTCDSNQIICHLNYLQGERGLNYDDLIRATTRISQRFDDPELFYGLYYLIGNMLKLSSNLVDCTEYMASISHFLGYK</sequence>
<organism>
    <name type="scientific">Porphyra purpurea</name>
    <name type="common">Red seaweed</name>
    <name type="synonym">Ulva purpurea</name>
    <dbReference type="NCBI Taxonomy" id="2787"/>
    <lineage>
        <taxon>Eukaryota</taxon>
        <taxon>Rhodophyta</taxon>
        <taxon>Bangiophyceae</taxon>
        <taxon>Bangiales</taxon>
        <taxon>Bangiaceae</taxon>
        <taxon>Porphyra</taxon>
    </lineage>
</organism>
<proteinExistence type="predicted"/>
<keyword id="KW-0150">Chloroplast</keyword>
<keyword id="KW-0934">Plastid</keyword>
<name>YCF22_PORPU</name>
<protein>
    <recommendedName>
        <fullName>Uncharacterized protein ycf22</fullName>
    </recommendedName>
</protein>
<reference key="1">
    <citation type="journal article" date="1995" name="Plant Mol. Biol. Rep.">
        <title>Complete nucleotide sequence of the Porphyra purpurea chloroplast genome.</title>
        <authorList>
            <person name="Reith M.E."/>
            <person name="Munholland J."/>
        </authorList>
    </citation>
    <scope>NUCLEOTIDE SEQUENCE [LARGE SCALE GENOMIC DNA]</scope>
    <source>
        <strain>Avonport</strain>
    </source>
</reference>
<dbReference type="EMBL" id="U38804">
    <property type="protein sequence ID" value="AAC08258.1"/>
    <property type="molecule type" value="Genomic_DNA"/>
</dbReference>
<dbReference type="PIR" id="S73293">
    <property type="entry name" value="S73293"/>
</dbReference>
<dbReference type="RefSeq" id="NP_053982.1">
    <property type="nucleotide sequence ID" value="NC_000925.1"/>
</dbReference>
<dbReference type="GeneID" id="810012"/>
<dbReference type="GO" id="GO:0009706">
    <property type="term" value="C:chloroplast inner membrane"/>
    <property type="evidence" value="ECO:0007669"/>
    <property type="project" value="TreeGrafter"/>
</dbReference>
<dbReference type="GO" id="GO:0005319">
    <property type="term" value="F:lipid transporter activity"/>
    <property type="evidence" value="ECO:0007669"/>
    <property type="project" value="TreeGrafter"/>
</dbReference>
<dbReference type="GO" id="GO:0005543">
    <property type="term" value="F:phospholipid binding"/>
    <property type="evidence" value="ECO:0007669"/>
    <property type="project" value="TreeGrafter"/>
</dbReference>
<dbReference type="InterPro" id="IPR003399">
    <property type="entry name" value="Mce/MlaD"/>
</dbReference>
<dbReference type="InterPro" id="IPR039342">
    <property type="entry name" value="TGD2-like"/>
</dbReference>
<dbReference type="PANTHER" id="PTHR34675">
    <property type="entry name" value="PROTEIN TRIGALACTOSYLDIACYLGLYCEROL 2, CHLOROPLASTIC"/>
    <property type="match status" value="1"/>
</dbReference>
<dbReference type="PANTHER" id="PTHR34675:SF1">
    <property type="entry name" value="PROTEIN TRIGALACTOSYLDIACYLGLYCEROL 2, CHLOROPLASTIC"/>
    <property type="match status" value="1"/>
</dbReference>
<dbReference type="Pfam" id="PF02470">
    <property type="entry name" value="MlaD"/>
    <property type="match status" value="1"/>
</dbReference>
<feature type="chain" id="PRO_0000217335" description="Uncharacterized protein ycf22">
    <location>
        <begin position="1"/>
        <end position="209"/>
    </location>
</feature>
<gene>
    <name type="primary">ycf22</name>
</gene>